<feature type="chain" id="PRO_1000053672" description="Uracil phosphoribosyltransferase">
    <location>
        <begin position="1"/>
        <end position="208"/>
    </location>
</feature>
<feature type="binding site" evidence="1">
    <location>
        <position position="78"/>
    </location>
    <ligand>
        <name>5-phospho-alpha-D-ribose 1-diphosphate</name>
        <dbReference type="ChEBI" id="CHEBI:58017"/>
    </ligand>
</feature>
<feature type="binding site" evidence="1">
    <location>
        <position position="103"/>
    </location>
    <ligand>
        <name>5-phospho-alpha-D-ribose 1-diphosphate</name>
        <dbReference type="ChEBI" id="CHEBI:58017"/>
    </ligand>
</feature>
<feature type="binding site" evidence="1">
    <location>
        <begin position="130"/>
        <end position="138"/>
    </location>
    <ligand>
        <name>5-phospho-alpha-D-ribose 1-diphosphate</name>
        <dbReference type="ChEBI" id="CHEBI:58017"/>
    </ligand>
</feature>
<feature type="binding site" evidence="1">
    <location>
        <position position="193"/>
    </location>
    <ligand>
        <name>uracil</name>
        <dbReference type="ChEBI" id="CHEBI:17568"/>
    </ligand>
</feature>
<feature type="binding site" evidence="1">
    <location>
        <begin position="198"/>
        <end position="200"/>
    </location>
    <ligand>
        <name>uracil</name>
        <dbReference type="ChEBI" id="CHEBI:17568"/>
    </ligand>
</feature>
<feature type="binding site" evidence="1">
    <location>
        <position position="199"/>
    </location>
    <ligand>
        <name>5-phospho-alpha-D-ribose 1-diphosphate</name>
        <dbReference type="ChEBI" id="CHEBI:58017"/>
    </ligand>
</feature>
<protein>
    <recommendedName>
        <fullName evidence="1">Uracil phosphoribosyltransferase</fullName>
        <ecNumber evidence="1">2.4.2.9</ecNumber>
    </recommendedName>
    <alternativeName>
        <fullName evidence="1">UMP pyrophosphorylase</fullName>
    </alternativeName>
    <alternativeName>
        <fullName evidence="1">UPRTase</fullName>
    </alternativeName>
</protein>
<organism>
    <name type="scientific">Aeromonas salmonicida (strain A449)</name>
    <dbReference type="NCBI Taxonomy" id="382245"/>
    <lineage>
        <taxon>Bacteria</taxon>
        <taxon>Pseudomonadati</taxon>
        <taxon>Pseudomonadota</taxon>
        <taxon>Gammaproteobacteria</taxon>
        <taxon>Aeromonadales</taxon>
        <taxon>Aeromonadaceae</taxon>
        <taxon>Aeromonas</taxon>
    </lineage>
</organism>
<gene>
    <name evidence="1" type="primary">upp</name>
    <name type="ordered locus">ASA_1511</name>
</gene>
<name>UPP_AERS4</name>
<proteinExistence type="inferred from homology"/>
<dbReference type="EC" id="2.4.2.9" evidence="1"/>
<dbReference type="EMBL" id="CP000644">
    <property type="protein sequence ID" value="ABO89601.1"/>
    <property type="molecule type" value="Genomic_DNA"/>
</dbReference>
<dbReference type="RefSeq" id="WP_005320172.1">
    <property type="nucleotide sequence ID" value="NC_009348.1"/>
</dbReference>
<dbReference type="SMR" id="A4SL29"/>
<dbReference type="STRING" id="29491.GCA_000820065_04001"/>
<dbReference type="GeneID" id="79879159"/>
<dbReference type="KEGG" id="asa:ASA_1511"/>
<dbReference type="eggNOG" id="COG0035">
    <property type="taxonomic scope" value="Bacteria"/>
</dbReference>
<dbReference type="HOGENOM" id="CLU_067096_2_2_6"/>
<dbReference type="UniPathway" id="UPA00574">
    <property type="reaction ID" value="UER00636"/>
</dbReference>
<dbReference type="Proteomes" id="UP000000225">
    <property type="component" value="Chromosome"/>
</dbReference>
<dbReference type="GO" id="GO:0005525">
    <property type="term" value="F:GTP binding"/>
    <property type="evidence" value="ECO:0007669"/>
    <property type="project" value="UniProtKB-KW"/>
</dbReference>
<dbReference type="GO" id="GO:0000287">
    <property type="term" value="F:magnesium ion binding"/>
    <property type="evidence" value="ECO:0007669"/>
    <property type="project" value="UniProtKB-UniRule"/>
</dbReference>
<dbReference type="GO" id="GO:0004845">
    <property type="term" value="F:uracil phosphoribosyltransferase activity"/>
    <property type="evidence" value="ECO:0007669"/>
    <property type="project" value="UniProtKB-UniRule"/>
</dbReference>
<dbReference type="GO" id="GO:0044206">
    <property type="term" value="P:UMP salvage"/>
    <property type="evidence" value="ECO:0007669"/>
    <property type="project" value="UniProtKB-UniRule"/>
</dbReference>
<dbReference type="GO" id="GO:0006223">
    <property type="term" value="P:uracil salvage"/>
    <property type="evidence" value="ECO:0007669"/>
    <property type="project" value="InterPro"/>
</dbReference>
<dbReference type="CDD" id="cd06223">
    <property type="entry name" value="PRTases_typeI"/>
    <property type="match status" value="1"/>
</dbReference>
<dbReference type="FunFam" id="3.40.50.2020:FF:000003">
    <property type="entry name" value="Uracil phosphoribosyltransferase"/>
    <property type="match status" value="1"/>
</dbReference>
<dbReference type="Gene3D" id="3.40.50.2020">
    <property type="match status" value="1"/>
</dbReference>
<dbReference type="HAMAP" id="MF_01218_B">
    <property type="entry name" value="Upp_B"/>
    <property type="match status" value="1"/>
</dbReference>
<dbReference type="InterPro" id="IPR000836">
    <property type="entry name" value="PRibTrfase_dom"/>
</dbReference>
<dbReference type="InterPro" id="IPR029057">
    <property type="entry name" value="PRTase-like"/>
</dbReference>
<dbReference type="InterPro" id="IPR034332">
    <property type="entry name" value="Upp_B"/>
</dbReference>
<dbReference type="InterPro" id="IPR050054">
    <property type="entry name" value="UPRTase/APRTase"/>
</dbReference>
<dbReference type="InterPro" id="IPR005765">
    <property type="entry name" value="Ura_phspho_trans"/>
</dbReference>
<dbReference type="NCBIfam" id="NF001097">
    <property type="entry name" value="PRK00129.1"/>
    <property type="match status" value="1"/>
</dbReference>
<dbReference type="NCBIfam" id="TIGR01091">
    <property type="entry name" value="upp"/>
    <property type="match status" value="1"/>
</dbReference>
<dbReference type="PANTHER" id="PTHR32315">
    <property type="entry name" value="ADENINE PHOSPHORIBOSYLTRANSFERASE"/>
    <property type="match status" value="1"/>
</dbReference>
<dbReference type="PANTHER" id="PTHR32315:SF4">
    <property type="entry name" value="URACIL PHOSPHORIBOSYLTRANSFERASE, CHLOROPLASTIC"/>
    <property type="match status" value="1"/>
</dbReference>
<dbReference type="Pfam" id="PF14681">
    <property type="entry name" value="UPRTase"/>
    <property type="match status" value="1"/>
</dbReference>
<dbReference type="SUPFAM" id="SSF53271">
    <property type="entry name" value="PRTase-like"/>
    <property type="match status" value="1"/>
</dbReference>
<evidence type="ECO:0000255" key="1">
    <source>
        <dbReference type="HAMAP-Rule" id="MF_01218"/>
    </source>
</evidence>
<reference key="1">
    <citation type="journal article" date="2008" name="BMC Genomics">
        <title>The genome of Aeromonas salmonicida subsp. salmonicida A449: insights into the evolution of a fish pathogen.</title>
        <authorList>
            <person name="Reith M.E."/>
            <person name="Singh R.K."/>
            <person name="Curtis B."/>
            <person name="Boyd J.M."/>
            <person name="Bouevitch A."/>
            <person name="Kimball J."/>
            <person name="Munholland J."/>
            <person name="Murphy C."/>
            <person name="Sarty D."/>
            <person name="Williams J."/>
            <person name="Nash J.H."/>
            <person name="Johnson S.C."/>
            <person name="Brown L.L."/>
        </authorList>
    </citation>
    <scope>NUCLEOTIDE SEQUENCE [LARGE SCALE GENOMIC DNA]</scope>
    <source>
        <strain>A449</strain>
    </source>
</reference>
<comment type="function">
    <text evidence="1">Catalyzes the conversion of uracil and 5-phospho-alpha-D-ribose 1-diphosphate (PRPP) to UMP and diphosphate.</text>
</comment>
<comment type="catalytic activity">
    <reaction evidence="1">
        <text>UMP + diphosphate = 5-phospho-alpha-D-ribose 1-diphosphate + uracil</text>
        <dbReference type="Rhea" id="RHEA:13017"/>
        <dbReference type="ChEBI" id="CHEBI:17568"/>
        <dbReference type="ChEBI" id="CHEBI:33019"/>
        <dbReference type="ChEBI" id="CHEBI:57865"/>
        <dbReference type="ChEBI" id="CHEBI:58017"/>
        <dbReference type="EC" id="2.4.2.9"/>
    </reaction>
</comment>
<comment type="cofactor">
    <cofactor evidence="1">
        <name>Mg(2+)</name>
        <dbReference type="ChEBI" id="CHEBI:18420"/>
    </cofactor>
    <text evidence="1">Binds 1 Mg(2+) ion per subunit. The magnesium is bound as Mg-PRPP.</text>
</comment>
<comment type="activity regulation">
    <text evidence="1">Allosterically activated by GTP.</text>
</comment>
<comment type="pathway">
    <text evidence="1">Pyrimidine metabolism; UMP biosynthesis via salvage pathway; UMP from uracil: step 1/1.</text>
</comment>
<comment type="similarity">
    <text evidence="1">Belongs to the UPRTase family.</text>
</comment>
<accession>A4SL29</accession>
<sequence>MKVVEVKHPLVKHKIGLMREGDISTKRFRELAKEVGSLLTYEATSDFETEKVTIDGWNGPVEVDQIKGKKVTVVPILRAGLGMMDGVLEHMPSARVSVVGIYRDEETLQPVPYFEKIVSNIEERLALVIDPMLATGGSMIATIDLLKKKGCQSIKVLVLVAAPEGIKALEAAHPDVELYCASVDQGLNEKGYIVPGLGDAGDKIFGTK</sequence>
<keyword id="KW-0021">Allosteric enzyme</keyword>
<keyword id="KW-0328">Glycosyltransferase</keyword>
<keyword id="KW-0342">GTP-binding</keyword>
<keyword id="KW-0460">Magnesium</keyword>
<keyword id="KW-0547">Nucleotide-binding</keyword>
<keyword id="KW-0808">Transferase</keyword>